<protein>
    <recommendedName>
        <fullName>Homeobox protein HD-7</fullName>
    </recommendedName>
    <alternativeName>
        <fullName>EcHD-7</fullName>
    </alternativeName>
</protein>
<feature type="chain" id="PRO_0000048916" description="Homeobox protein HD-7">
    <location>
        <begin position="1"/>
        <end position="107"/>
    </location>
</feature>
<feature type="DNA-binding region" description="Homeobox" evidence="1">
    <location>
        <begin position="21"/>
        <end position="80"/>
    </location>
</feature>
<gene>
    <name type="primary">HD-7</name>
    <name type="ordered locus">ECU03_0610</name>
</gene>
<evidence type="ECO:0000255" key="1">
    <source>
        <dbReference type="PROSITE-ProRule" id="PRU00108"/>
    </source>
</evidence>
<evidence type="ECO:0000305" key="2"/>
<reference key="1">
    <citation type="journal article" date="2001" name="Nature">
        <title>Genome sequence and gene compaction of the eukaryote parasite Encephalitozoon cuniculi.</title>
        <authorList>
            <person name="Katinka M.D."/>
            <person name="Duprat S."/>
            <person name="Cornillot E."/>
            <person name="Metenier G."/>
            <person name="Thomarat F."/>
            <person name="Prensier G."/>
            <person name="Barbe V."/>
            <person name="Peyretaillade E."/>
            <person name="Brottier P."/>
            <person name="Wincker P."/>
            <person name="Delbac F."/>
            <person name="El Alaoui H."/>
            <person name="Peyret P."/>
            <person name="Saurin W."/>
            <person name="Gouy M."/>
            <person name="Weissenbach J."/>
            <person name="Vivares C.P."/>
        </authorList>
    </citation>
    <scope>NUCLEOTIDE SEQUENCE [LARGE SCALE GENOMIC DNA]</scope>
    <source>
        <strain>GB-M1</strain>
    </source>
</reference>
<reference key="2">
    <citation type="journal article" date="2009" name="BMC Genomics">
        <title>Identification of transcriptional signals in Encephalitozoon cuniculi widespread among Microsporidia phylum: support for accurate structural genome annotation.</title>
        <authorList>
            <person name="Peyretaillade E."/>
            <person name="Goncalves O."/>
            <person name="Terrat S."/>
            <person name="Dugat-Bony E."/>
            <person name="Wincker P."/>
            <person name="Cornman R.S."/>
            <person name="Evans J.D."/>
            <person name="Delbac F."/>
            <person name="Peyret P."/>
        </authorList>
    </citation>
    <scope>GENOME REANNOTATION</scope>
    <source>
        <strain>GB-M1</strain>
    </source>
</reference>
<reference key="3">
    <citation type="journal article" date="2003" name="Dev. Genes Evol.">
        <title>The homeobox genes of Encephalitozoon cuniculi (Microsporidia) reveal a putative mating-type locus.</title>
        <authorList>
            <person name="Buerglin T.R."/>
        </authorList>
    </citation>
    <scope>GENE NAME</scope>
</reference>
<sequence length="107" mass="12386">MEVQAVLGMILLFHPERCSKKPGEKVRKSEFQKEVLKKVYQATPYPTWENKIDIGILISLSPRAVDIWFQNKRHINKGKNQGVDEAVESRTIDLQTIMSIVESTLRY</sequence>
<proteinExistence type="predicted"/>
<dbReference type="EMBL" id="AL590443">
    <property type="protein sequence ID" value="CAD26207.2"/>
    <property type="molecule type" value="Genomic_DNA"/>
</dbReference>
<dbReference type="EMBL" id="BK001340">
    <property type="protein sequence ID" value="DAA01303.1"/>
    <property type="status" value="ALT_INIT"/>
    <property type="molecule type" value="Genomic_DNA"/>
</dbReference>
<dbReference type="RefSeq" id="NP_597572.1">
    <property type="nucleotide sequence ID" value="NM_001040936.1"/>
</dbReference>
<dbReference type="SMR" id="Q8SW50"/>
<dbReference type="GeneID" id="858734"/>
<dbReference type="KEGG" id="ecu:ECU03_0610"/>
<dbReference type="VEuPathDB" id="MicrosporidiaDB:ECU03_0610"/>
<dbReference type="HOGENOM" id="CLU_128308_1_0_1"/>
<dbReference type="InParanoid" id="Q8SW50"/>
<dbReference type="OrthoDB" id="6159439at2759"/>
<dbReference type="Proteomes" id="UP000000819">
    <property type="component" value="Chromosome III"/>
</dbReference>
<dbReference type="GO" id="GO:0005634">
    <property type="term" value="C:nucleus"/>
    <property type="evidence" value="ECO:0007669"/>
    <property type="project" value="UniProtKB-SubCell"/>
</dbReference>
<dbReference type="GO" id="GO:0000978">
    <property type="term" value="F:RNA polymerase II cis-regulatory region sequence-specific DNA binding"/>
    <property type="evidence" value="ECO:0007669"/>
    <property type="project" value="TreeGrafter"/>
</dbReference>
<dbReference type="GO" id="GO:0030154">
    <property type="term" value="P:cell differentiation"/>
    <property type="evidence" value="ECO:0007669"/>
    <property type="project" value="TreeGrafter"/>
</dbReference>
<dbReference type="GO" id="GO:0006357">
    <property type="term" value="P:regulation of transcription by RNA polymerase II"/>
    <property type="evidence" value="ECO:0007669"/>
    <property type="project" value="TreeGrafter"/>
</dbReference>
<dbReference type="CDD" id="cd00086">
    <property type="entry name" value="homeodomain"/>
    <property type="match status" value="1"/>
</dbReference>
<dbReference type="Gene3D" id="1.10.10.60">
    <property type="entry name" value="Homeodomain-like"/>
    <property type="match status" value="1"/>
</dbReference>
<dbReference type="InterPro" id="IPR001356">
    <property type="entry name" value="HD"/>
</dbReference>
<dbReference type="InterPro" id="IPR051000">
    <property type="entry name" value="Homeobox_DNA-bind_prot"/>
</dbReference>
<dbReference type="InterPro" id="IPR009057">
    <property type="entry name" value="Homeodomain-like_sf"/>
</dbReference>
<dbReference type="PANTHER" id="PTHR24324:SF9">
    <property type="entry name" value="HOMEOBOX DOMAIN-CONTAINING PROTEIN"/>
    <property type="match status" value="1"/>
</dbReference>
<dbReference type="PANTHER" id="PTHR24324">
    <property type="entry name" value="HOMEOBOX PROTEIN HHEX"/>
    <property type="match status" value="1"/>
</dbReference>
<dbReference type="Pfam" id="PF00046">
    <property type="entry name" value="Homeodomain"/>
    <property type="match status" value="1"/>
</dbReference>
<dbReference type="SMART" id="SM00389">
    <property type="entry name" value="HOX"/>
    <property type="match status" value="1"/>
</dbReference>
<dbReference type="SUPFAM" id="SSF46689">
    <property type="entry name" value="Homeodomain-like"/>
    <property type="match status" value="1"/>
</dbReference>
<dbReference type="PROSITE" id="PS50071">
    <property type="entry name" value="HOMEOBOX_2"/>
    <property type="match status" value="1"/>
</dbReference>
<organism>
    <name type="scientific">Encephalitozoon cuniculi (strain GB-M1)</name>
    <name type="common">Microsporidian parasite</name>
    <dbReference type="NCBI Taxonomy" id="284813"/>
    <lineage>
        <taxon>Eukaryota</taxon>
        <taxon>Fungi</taxon>
        <taxon>Fungi incertae sedis</taxon>
        <taxon>Microsporidia</taxon>
        <taxon>Unikaryonidae</taxon>
        <taxon>Encephalitozoon</taxon>
    </lineage>
</organism>
<comment type="subcellular location">
    <subcellularLocation>
        <location>Nucleus</location>
    </subcellularLocation>
</comment>
<comment type="sequence caution" evidence="2">
    <conflict type="erroneous initiation">
        <sequence resource="EMBL-CDS" id="DAA01303"/>
    </conflict>
    <text>Extended N-terminus.</text>
</comment>
<accession>Q8SW50</accession>
<accession>Q7SI89</accession>
<keyword id="KW-0238">DNA-binding</keyword>
<keyword id="KW-0371">Homeobox</keyword>
<keyword id="KW-0539">Nucleus</keyword>
<keyword id="KW-1185">Reference proteome</keyword>
<name>HD7_ENCCU</name>